<sequence length="347" mass="37530">MNLQGKNVTLYDMSLLXFMHPNPYHITLEQMIAVPTVLDAPRIPLIEITLRDGLGGRSINYVFPAHIDEEYLRAVIPRLKQAKVSALLLPGIGTVDHLNMALDCGVSTILVATHCTEADVSEHHIGMSRMLGADTVGFLMMAHMIRRGKSAGAARLDVKCYGANCIYCTDSAGYMLPDEVSEKIGLLRAELNPATEIGFHGHHNMGMAIANSLAGHRGGASRIDGSVAGLGAGAGNTPLEVFVAVCKRMGVETGIDLYKIMDVAEDLVVPMMDQPIRVDRDALTLGYAGVYSSFLLFAQRAEKKYGVPARDILVELGRRGTVGGQEDMIEDLALDMSRARQKQKVSA</sequence>
<protein>
    <recommendedName>
        <fullName evidence="1">4-hydroxy-2-oxovalerate aldolase 1</fullName>
        <shortName evidence="1">HOA 1</shortName>
        <ecNumber evidence="1">4.1.3.39</ecNumber>
    </recommendedName>
    <alternativeName>
        <fullName evidence="1">4-hydroxy-2-keto-pentanoic acid aldolase 1</fullName>
    </alternativeName>
    <alternativeName>
        <fullName evidence="1">4-hydroxy-2-oxopentanoate aldolase 1</fullName>
    </alternativeName>
</protein>
<proteinExistence type="inferred from homology"/>
<accession>Q4F8H9</accession>
<dbReference type="EC" id="4.1.3.39" evidence="1"/>
<dbReference type="EMBL" id="DQ100350">
    <property type="protein sequence ID" value="AAZ08071.1"/>
    <property type="molecule type" value="Genomic_DNA"/>
</dbReference>
<dbReference type="STRING" id="1149133.ppKF707_1508"/>
<dbReference type="GO" id="GO:0003852">
    <property type="term" value="F:2-isopropylmalate synthase activity"/>
    <property type="evidence" value="ECO:0007669"/>
    <property type="project" value="TreeGrafter"/>
</dbReference>
<dbReference type="GO" id="GO:0008701">
    <property type="term" value="F:4-hydroxy-2-oxovalerate aldolase activity"/>
    <property type="evidence" value="ECO:0007669"/>
    <property type="project" value="UniProtKB-UniRule"/>
</dbReference>
<dbReference type="GO" id="GO:0030145">
    <property type="term" value="F:manganese ion binding"/>
    <property type="evidence" value="ECO:0007669"/>
    <property type="project" value="UniProtKB-UniRule"/>
</dbReference>
<dbReference type="GO" id="GO:0009056">
    <property type="term" value="P:catabolic process"/>
    <property type="evidence" value="ECO:0007669"/>
    <property type="project" value="UniProtKB-KW"/>
</dbReference>
<dbReference type="GO" id="GO:0009098">
    <property type="term" value="P:L-leucine biosynthetic process"/>
    <property type="evidence" value="ECO:0007669"/>
    <property type="project" value="TreeGrafter"/>
</dbReference>
<dbReference type="CDD" id="cd07943">
    <property type="entry name" value="DRE_TIM_HOA"/>
    <property type="match status" value="1"/>
</dbReference>
<dbReference type="Gene3D" id="1.10.8.60">
    <property type="match status" value="1"/>
</dbReference>
<dbReference type="Gene3D" id="3.20.20.70">
    <property type="entry name" value="Aldolase class I"/>
    <property type="match status" value="1"/>
</dbReference>
<dbReference type="HAMAP" id="MF_01656">
    <property type="entry name" value="HOA"/>
    <property type="match status" value="1"/>
</dbReference>
<dbReference type="InterPro" id="IPR050073">
    <property type="entry name" value="2-IPM_HCS-like"/>
</dbReference>
<dbReference type="InterPro" id="IPR017629">
    <property type="entry name" value="4OH_2_O-val_aldolase"/>
</dbReference>
<dbReference type="InterPro" id="IPR013785">
    <property type="entry name" value="Aldolase_TIM"/>
</dbReference>
<dbReference type="InterPro" id="IPR012425">
    <property type="entry name" value="DmpG_comm"/>
</dbReference>
<dbReference type="InterPro" id="IPR035685">
    <property type="entry name" value="DRE_TIM_HOA"/>
</dbReference>
<dbReference type="InterPro" id="IPR000891">
    <property type="entry name" value="PYR_CT"/>
</dbReference>
<dbReference type="NCBIfam" id="TIGR03217">
    <property type="entry name" value="4OH_2_O_val_ald"/>
    <property type="match status" value="1"/>
</dbReference>
<dbReference type="NCBIfam" id="NF006049">
    <property type="entry name" value="PRK08195.1"/>
    <property type="match status" value="1"/>
</dbReference>
<dbReference type="PANTHER" id="PTHR10277:SF9">
    <property type="entry name" value="2-ISOPROPYLMALATE SYNTHASE 1, CHLOROPLASTIC-RELATED"/>
    <property type="match status" value="1"/>
</dbReference>
<dbReference type="PANTHER" id="PTHR10277">
    <property type="entry name" value="HOMOCITRATE SYNTHASE-RELATED"/>
    <property type="match status" value="1"/>
</dbReference>
<dbReference type="Pfam" id="PF07836">
    <property type="entry name" value="DmpG_comm"/>
    <property type="match status" value="1"/>
</dbReference>
<dbReference type="Pfam" id="PF00682">
    <property type="entry name" value="HMGL-like"/>
    <property type="match status" value="1"/>
</dbReference>
<dbReference type="SUPFAM" id="SSF51569">
    <property type="entry name" value="Aldolase"/>
    <property type="match status" value="1"/>
</dbReference>
<dbReference type="SUPFAM" id="SSF89000">
    <property type="entry name" value="post-HMGL domain-like"/>
    <property type="match status" value="1"/>
</dbReference>
<dbReference type="PROSITE" id="PS50991">
    <property type="entry name" value="PYR_CT"/>
    <property type="match status" value="1"/>
</dbReference>
<keyword id="KW-0058">Aromatic hydrocarbons catabolism</keyword>
<keyword id="KW-0456">Lyase</keyword>
<keyword id="KW-0464">Manganese</keyword>
<keyword id="KW-0479">Metal-binding</keyword>
<name>HOA1_METFU</name>
<gene>
    <name type="primary">salH</name>
</gene>
<evidence type="ECO:0000255" key="1">
    <source>
        <dbReference type="HAMAP-Rule" id="MF_01656"/>
    </source>
</evidence>
<comment type="catalytic activity">
    <reaction evidence="1">
        <text>(S)-4-hydroxy-2-oxopentanoate = acetaldehyde + pyruvate</text>
        <dbReference type="Rhea" id="RHEA:22624"/>
        <dbReference type="ChEBI" id="CHEBI:15343"/>
        <dbReference type="ChEBI" id="CHEBI:15361"/>
        <dbReference type="ChEBI" id="CHEBI:73143"/>
        <dbReference type="EC" id="4.1.3.39"/>
    </reaction>
</comment>
<comment type="similarity">
    <text evidence="1">Belongs to the 4-hydroxy-2-oxovalerate aldolase family.</text>
</comment>
<reference key="1">
    <citation type="journal article" date="2006" name="J. Bacteriol.">
        <title>Cross-regulation of biphenyl- and salicylate-catabolic genes by two regulatory systems in Pseudomonas pseudoalcaligenes KF707.</title>
        <authorList>
            <person name="Fujihara H."/>
            <person name="Yoshida H."/>
            <person name="Matsunaga T."/>
            <person name="Goto M."/>
            <person name="Furukawa K."/>
        </authorList>
    </citation>
    <scope>NUCLEOTIDE SEQUENCE [GENOMIC DNA]</scope>
    <source>
        <strain>DSM 10086 / NBRC 110670 / KF707</strain>
    </source>
</reference>
<organism>
    <name type="scientific">Metapseudomonas furukawaii</name>
    <name type="common">Pseudomonas furukawaii</name>
    <dbReference type="NCBI Taxonomy" id="1149133"/>
    <lineage>
        <taxon>Bacteria</taxon>
        <taxon>Pseudomonadati</taxon>
        <taxon>Pseudomonadota</taxon>
        <taxon>Gammaproteobacteria</taxon>
        <taxon>Pseudomonadales</taxon>
        <taxon>Pseudomonadaceae</taxon>
        <taxon>Metapseudomonas</taxon>
    </lineage>
</organism>
<feature type="chain" id="PRO_0000387880" description="4-hydroxy-2-oxovalerate aldolase 1">
    <location>
        <begin position="1"/>
        <end position="347"/>
    </location>
</feature>
<feature type="domain" description="Pyruvate carboxyltransferase" evidence="1">
    <location>
        <begin position="8"/>
        <end position="261"/>
    </location>
</feature>
<feature type="active site" description="Proton acceptor" evidence="1">
    <location>
        <position position="20"/>
    </location>
</feature>
<feature type="binding site" evidence="1">
    <location>
        <position position="171"/>
    </location>
    <ligand>
        <name>substrate</name>
    </ligand>
</feature>
<feature type="binding site" evidence="1">
    <location>
        <position position="200"/>
    </location>
    <ligand>
        <name>Mn(2+)</name>
        <dbReference type="ChEBI" id="CHEBI:29035"/>
    </ligand>
</feature>
<feature type="binding site" evidence="1">
    <location>
        <position position="200"/>
    </location>
    <ligand>
        <name>substrate</name>
    </ligand>
</feature>
<feature type="binding site" evidence="1">
    <location>
        <position position="202"/>
    </location>
    <ligand>
        <name>Mn(2+)</name>
        <dbReference type="ChEBI" id="CHEBI:29035"/>
    </ligand>
</feature>
<feature type="binding site" evidence="1">
    <location>
        <position position="291"/>
    </location>
    <ligand>
        <name>substrate</name>
    </ligand>
</feature>